<dbReference type="EC" id="3.1.1.29" evidence="1"/>
<dbReference type="EMBL" id="CP000361">
    <property type="protein sequence ID" value="ABV66904.1"/>
    <property type="molecule type" value="Genomic_DNA"/>
</dbReference>
<dbReference type="RefSeq" id="WP_012012413.1">
    <property type="nucleotide sequence ID" value="NC_009850.1"/>
</dbReference>
<dbReference type="SMR" id="A8ESI0"/>
<dbReference type="STRING" id="367737.Abu_0639"/>
<dbReference type="GeneID" id="24304612"/>
<dbReference type="KEGG" id="abu:Abu_0639"/>
<dbReference type="eggNOG" id="COG0193">
    <property type="taxonomic scope" value="Bacteria"/>
</dbReference>
<dbReference type="HOGENOM" id="CLU_062456_4_1_7"/>
<dbReference type="Proteomes" id="UP000001136">
    <property type="component" value="Chromosome"/>
</dbReference>
<dbReference type="GO" id="GO:0005737">
    <property type="term" value="C:cytoplasm"/>
    <property type="evidence" value="ECO:0007669"/>
    <property type="project" value="UniProtKB-SubCell"/>
</dbReference>
<dbReference type="GO" id="GO:0004045">
    <property type="term" value="F:peptidyl-tRNA hydrolase activity"/>
    <property type="evidence" value="ECO:0007669"/>
    <property type="project" value="UniProtKB-UniRule"/>
</dbReference>
<dbReference type="GO" id="GO:0000049">
    <property type="term" value="F:tRNA binding"/>
    <property type="evidence" value="ECO:0007669"/>
    <property type="project" value="UniProtKB-UniRule"/>
</dbReference>
<dbReference type="GO" id="GO:0006515">
    <property type="term" value="P:protein quality control for misfolded or incompletely synthesized proteins"/>
    <property type="evidence" value="ECO:0007669"/>
    <property type="project" value="UniProtKB-UniRule"/>
</dbReference>
<dbReference type="GO" id="GO:0072344">
    <property type="term" value="P:rescue of stalled ribosome"/>
    <property type="evidence" value="ECO:0007669"/>
    <property type="project" value="UniProtKB-UniRule"/>
</dbReference>
<dbReference type="CDD" id="cd00462">
    <property type="entry name" value="PTH"/>
    <property type="match status" value="1"/>
</dbReference>
<dbReference type="FunFam" id="3.40.50.1470:FF:000001">
    <property type="entry name" value="Peptidyl-tRNA hydrolase"/>
    <property type="match status" value="1"/>
</dbReference>
<dbReference type="Gene3D" id="3.40.50.1470">
    <property type="entry name" value="Peptidyl-tRNA hydrolase"/>
    <property type="match status" value="1"/>
</dbReference>
<dbReference type="HAMAP" id="MF_00083">
    <property type="entry name" value="Pept_tRNA_hydro_bact"/>
    <property type="match status" value="1"/>
</dbReference>
<dbReference type="InterPro" id="IPR001328">
    <property type="entry name" value="Pept_tRNA_hydro"/>
</dbReference>
<dbReference type="InterPro" id="IPR018171">
    <property type="entry name" value="Pept_tRNA_hydro_CS"/>
</dbReference>
<dbReference type="InterPro" id="IPR036416">
    <property type="entry name" value="Pept_tRNA_hydro_sf"/>
</dbReference>
<dbReference type="NCBIfam" id="TIGR00447">
    <property type="entry name" value="pth"/>
    <property type="match status" value="1"/>
</dbReference>
<dbReference type="PANTHER" id="PTHR17224">
    <property type="entry name" value="PEPTIDYL-TRNA HYDROLASE"/>
    <property type="match status" value="1"/>
</dbReference>
<dbReference type="PANTHER" id="PTHR17224:SF1">
    <property type="entry name" value="PEPTIDYL-TRNA HYDROLASE"/>
    <property type="match status" value="1"/>
</dbReference>
<dbReference type="Pfam" id="PF01195">
    <property type="entry name" value="Pept_tRNA_hydro"/>
    <property type="match status" value="1"/>
</dbReference>
<dbReference type="SUPFAM" id="SSF53178">
    <property type="entry name" value="Peptidyl-tRNA hydrolase-like"/>
    <property type="match status" value="1"/>
</dbReference>
<dbReference type="PROSITE" id="PS01195">
    <property type="entry name" value="PEPT_TRNA_HYDROL_1"/>
    <property type="match status" value="1"/>
</dbReference>
<dbReference type="PROSITE" id="PS01196">
    <property type="entry name" value="PEPT_TRNA_HYDROL_2"/>
    <property type="match status" value="1"/>
</dbReference>
<reference key="1">
    <citation type="journal article" date="2007" name="PLoS ONE">
        <title>The complete genome sequence and analysis of the Epsilonproteobacterium Arcobacter butzleri.</title>
        <authorList>
            <person name="Miller W.G."/>
            <person name="Parker C.T."/>
            <person name="Rubenfield M."/>
            <person name="Mendz G.L."/>
            <person name="Woesten M.M.S.M."/>
            <person name="Ussery D.W."/>
            <person name="Stolz J.F."/>
            <person name="Binnewies T.T."/>
            <person name="Hallin P.F."/>
            <person name="Wang G."/>
            <person name="Malek J.A."/>
            <person name="Rogosin A."/>
            <person name="Stanker L.H."/>
            <person name="Mandrell R.E."/>
        </authorList>
    </citation>
    <scope>NUCLEOTIDE SEQUENCE [LARGE SCALE GENOMIC DNA]</scope>
    <source>
        <strain>RM4018</strain>
    </source>
</reference>
<gene>
    <name evidence="1" type="primary">pth</name>
    <name type="ordered locus">Abu_0639</name>
</gene>
<proteinExistence type="inferred from homology"/>
<comment type="function">
    <text evidence="1">Hydrolyzes ribosome-free peptidyl-tRNAs (with 1 or more amino acids incorporated), which drop off the ribosome during protein synthesis, or as a result of ribosome stalling.</text>
</comment>
<comment type="function">
    <text evidence="1">Catalyzes the release of premature peptidyl moieties from peptidyl-tRNA molecules trapped in stalled 50S ribosomal subunits, and thus maintains levels of free tRNAs and 50S ribosomes.</text>
</comment>
<comment type="catalytic activity">
    <reaction evidence="1">
        <text>an N-acyl-L-alpha-aminoacyl-tRNA + H2O = an N-acyl-L-amino acid + a tRNA + H(+)</text>
        <dbReference type="Rhea" id="RHEA:54448"/>
        <dbReference type="Rhea" id="RHEA-COMP:10123"/>
        <dbReference type="Rhea" id="RHEA-COMP:13883"/>
        <dbReference type="ChEBI" id="CHEBI:15377"/>
        <dbReference type="ChEBI" id="CHEBI:15378"/>
        <dbReference type="ChEBI" id="CHEBI:59874"/>
        <dbReference type="ChEBI" id="CHEBI:78442"/>
        <dbReference type="ChEBI" id="CHEBI:138191"/>
        <dbReference type="EC" id="3.1.1.29"/>
    </reaction>
</comment>
<comment type="subunit">
    <text evidence="1">Monomer.</text>
</comment>
<comment type="subcellular location">
    <subcellularLocation>
        <location evidence="1">Cytoplasm</location>
    </subcellularLocation>
</comment>
<comment type="similarity">
    <text evidence="1">Belongs to the PTH family.</text>
</comment>
<protein>
    <recommendedName>
        <fullName evidence="1">Peptidyl-tRNA hydrolase</fullName>
        <shortName evidence="1">Pth</shortName>
        <ecNumber evidence="1">3.1.1.29</ecNumber>
    </recommendedName>
</protein>
<feature type="chain" id="PRO_1000057546" description="Peptidyl-tRNA hydrolase">
    <location>
        <begin position="1"/>
        <end position="183"/>
    </location>
</feature>
<feature type="active site" description="Proton acceptor" evidence="1">
    <location>
        <position position="19"/>
    </location>
</feature>
<feature type="binding site" evidence="1">
    <location>
        <position position="14"/>
    </location>
    <ligand>
        <name>tRNA</name>
        <dbReference type="ChEBI" id="CHEBI:17843"/>
    </ligand>
</feature>
<feature type="binding site" evidence="1">
    <location>
        <position position="61"/>
    </location>
    <ligand>
        <name>tRNA</name>
        <dbReference type="ChEBI" id="CHEBI:17843"/>
    </ligand>
</feature>
<feature type="binding site" evidence="1">
    <location>
        <position position="63"/>
    </location>
    <ligand>
        <name>tRNA</name>
        <dbReference type="ChEBI" id="CHEBI:17843"/>
    </ligand>
</feature>
<feature type="binding site" evidence="1">
    <location>
        <position position="109"/>
    </location>
    <ligand>
        <name>tRNA</name>
        <dbReference type="ChEBI" id="CHEBI:17843"/>
    </ligand>
</feature>
<feature type="site" description="Discriminates between blocked and unblocked aminoacyl-tRNA" evidence="1">
    <location>
        <position position="9"/>
    </location>
</feature>
<feature type="site" description="Stabilizes the basic form of H active site to accept a proton" evidence="1">
    <location>
        <position position="88"/>
    </location>
</feature>
<name>PTH_ALIB4</name>
<accession>A8ESI0</accession>
<organism>
    <name type="scientific">Aliarcobacter butzleri (strain RM4018)</name>
    <name type="common">Arcobacter butzleri</name>
    <dbReference type="NCBI Taxonomy" id="367737"/>
    <lineage>
        <taxon>Bacteria</taxon>
        <taxon>Pseudomonadati</taxon>
        <taxon>Campylobacterota</taxon>
        <taxon>Epsilonproteobacteria</taxon>
        <taxon>Campylobacterales</taxon>
        <taxon>Arcobacteraceae</taxon>
        <taxon>Aliarcobacter</taxon>
    </lineage>
</organism>
<keyword id="KW-0963">Cytoplasm</keyword>
<keyword id="KW-0378">Hydrolase</keyword>
<keyword id="KW-1185">Reference proteome</keyword>
<keyword id="KW-0694">RNA-binding</keyword>
<keyword id="KW-0820">tRNA-binding</keyword>
<sequence>MYLIVGLGNIGEKYQYTRHNVGFLVIDEMAKNLQTSNVNNSNFQSTLLKSGYNLFAKPTTYMNNSGVAVHSIKEYYKIDLENIIVIHDDLDLPFGTVKFKIGGGHGGHNGLKSLDSHIGKDYIRVRIGIGKPQNKDDVANFVLSDFSKEELNKLEDIIKHTINAIEALKTADIDEVKSKFTLK</sequence>
<evidence type="ECO:0000255" key="1">
    <source>
        <dbReference type="HAMAP-Rule" id="MF_00083"/>
    </source>
</evidence>